<accession>Q0BWC7</accession>
<dbReference type="EMBL" id="CP000158">
    <property type="protein sequence ID" value="ABI77955.1"/>
    <property type="molecule type" value="Genomic_DNA"/>
</dbReference>
<dbReference type="RefSeq" id="WP_011648510.1">
    <property type="nucleotide sequence ID" value="NC_008358.1"/>
</dbReference>
<dbReference type="SMR" id="Q0BWC7"/>
<dbReference type="STRING" id="228405.HNE_3545"/>
<dbReference type="KEGG" id="hne:HNE_3545"/>
<dbReference type="eggNOG" id="COG2835">
    <property type="taxonomic scope" value="Bacteria"/>
</dbReference>
<dbReference type="HOGENOM" id="CLU_2506040_0_0_5"/>
<dbReference type="Proteomes" id="UP000001959">
    <property type="component" value="Chromosome"/>
</dbReference>
<dbReference type="GO" id="GO:0005829">
    <property type="term" value="C:cytosol"/>
    <property type="evidence" value="ECO:0007669"/>
    <property type="project" value="TreeGrafter"/>
</dbReference>
<dbReference type="FunFam" id="2.20.25.10:FF:000002">
    <property type="entry name" value="UPF0434 protein YcaR"/>
    <property type="match status" value="1"/>
</dbReference>
<dbReference type="Gene3D" id="2.20.25.10">
    <property type="match status" value="1"/>
</dbReference>
<dbReference type="HAMAP" id="MF_01187">
    <property type="entry name" value="UPF0434"/>
    <property type="match status" value="1"/>
</dbReference>
<dbReference type="InterPro" id="IPR005651">
    <property type="entry name" value="Trm112-like"/>
</dbReference>
<dbReference type="PANTHER" id="PTHR33505:SF4">
    <property type="entry name" value="PROTEIN PREY, MITOCHONDRIAL"/>
    <property type="match status" value="1"/>
</dbReference>
<dbReference type="PANTHER" id="PTHR33505">
    <property type="entry name" value="ZGC:162634"/>
    <property type="match status" value="1"/>
</dbReference>
<dbReference type="Pfam" id="PF03966">
    <property type="entry name" value="Trm112p"/>
    <property type="match status" value="1"/>
</dbReference>
<dbReference type="SUPFAM" id="SSF158997">
    <property type="entry name" value="Trm112p-like"/>
    <property type="match status" value="1"/>
</dbReference>
<protein>
    <recommendedName>
        <fullName evidence="1">UPF0434 protein HNE_3545</fullName>
    </recommendedName>
</protein>
<sequence>MSDLPDQTPKDDSVLFEANGVDPRLLEILICPATRQPLAYDRARHELVSKNARLAYPIRGGIPIMLEEEARDLDDTEGTAGGGEA</sequence>
<keyword id="KW-1185">Reference proteome</keyword>
<comment type="similarity">
    <text evidence="1">Belongs to the UPF0434 family.</text>
</comment>
<organism>
    <name type="scientific">Hyphomonas neptunium (strain ATCC 15444)</name>
    <dbReference type="NCBI Taxonomy" id="228405"/>
    <lineage>
        <taxon>Bacteria</taxon>
        <taxon>Pseudomonadati</taxon>
        <taxon>Pseudomonadota</taxon>
        <taxon>Alphaproteobacteria</taxon>
        <taxon>Hyphomonadales</taxon>
        <taxon>Hyphomonadaceae</taxon>
        <taxon>Hyphomonas</taxon>
    </lineage>
</organism>
<reference key="1">
    <citation type="journal article" date="2006" name="J. Bacteriol.">
        <title>Comparative genomic evidence for a close relationship between the dimorphic prosthecate bacteria Hyphomonas neptunium and Caulobacter crescentus.</title>
        <authorList>
            <person name="Badger J.H."/>
            <person name="Hoover T.R."/>
            <person name="Brun Y.V."/>
            <person name="Weiner R.M."/>
            <person name="Laub M.T."/>
            <person name="Alexandre G."/>
            <person name="Mrazek J."/>
            <person name="Ren Q."/>
            <person name="Paulsen I.T."/>
            <person name="Nelson K.E."/>
            <person name="Khouri H.M."/>
            <person name="Radune D."/>
            <person name="Sosa J."/>
            <person name="Dodson R.J."/>
            <person name="Sullivan S.A."/>
            <person name="Rosovitz M.J."/>
            <person name="Madupu R."/>
            <person name="Brinkac L.M."/>
            <person name="Durkin A.S."/>
            <person name="Daugherty S.C."/>
            <person name="Kothari S.P."/>
            <person name="Giglio M.G."/>
            <person name="Zhou L."/>
            <person name="Haft D.H."/>
            <person name="Selengut J.D."/>
            <person name="Davidsen T.M."/>
            <person name="Yang Q."/>
            <person name="Zafar N."/>
            <person name="Ward N.L."/>
        </authorList>
    </citation>
    <scope>NUCLEOTIDE SEQUENCE [LARGE SCALE GENOMIC DNA]</scope>
    <source>
        <strain>ATCC 15444</strain>
    </source>
</reference>
<evidence type="ECO:0000255" key="1">
    <source>
        <dbReference type="HAMAP-Rule" id="MF_01187"/>
    </source>
</evidence>
<feature type="chain" id="PRO_0000291101" description="UPF0434 protein HNE_3545">
    <location>
        <begin position="1"/>
        <end position="85"/>
    </location>
</feature>
<gene>
    <name type="ordered locus">HNE_3545</name>
</gene>
<proteinExistence type="inferred from homology"/>
<name>Y3545_HYPNA</name>